<comment type="catalytic activity">
    <reaction evidence="1">
        <text>alpha-D-galactose 1-phosphate + UDP-alpha-D-glucose = alpha-D-glucose 1-phosphate + UDP-alpha-D-galactose</text>
        <dbReference type="Rhea" id="RHEA:13989"/>
        <dbReference type="ChEBI" id="CHEBI:58336"/>
        <dbReference type="ChEBI" id="CHEBI:58601"/>
        <dbReference type="ChEBI" id="CHEBI:58885"/>
        <dbReference type="ChEBI" id="CHEBI:66914"/>
        <dbReference type="EC" id="2.7.7.12"/>
    </reaction>
</comment>
<comment type="pathway">
    <text evidence="1">Carbohydrate metabolism; galactose metabolism.</text>
</comment>
<comment type="subcellular location">
    <subcellularLocation>
        <location evidence="1">Cytoplasm</location>
    </subcellularLocation>
</comment>
<comment type="similarity">
    <text evidence="1">Belongs to the galactose-1-phosphate uridylyltransferase type 2 family.</text>
</comment>
<comment type="sequence caution" evidence="2">
    <conflict type="erroneous initiation">
        <sequence resource="EMBL-CDS" id="AAV61015"/>
    </conflict>
</comment>
<gene>
    <name evidence="1" type="primary">galT</name>
    <name type="ordered locus">stu1401</name>
</gene>
<sequence length="493" mass="55500">MAENLVNTFVTQVIENSDYEELDRIYLTNKVFTLVGEGVADVETDSSELIDLKDQLLQAGVKAGSVGELNEEQDIIGAQLMDLITPRPSVVNRNFWDTYKSNPEQAIADFYAQSKRNDYVKVKAIAQNIAYKAPTKYGDLEITINLSKPEKDPKAIAAAKNAVASDYPKCQLCMENEGYLGRINHPARSNHRVVRFQMEDKEWGFQYSPYAYFNEHSIFFYGKHEPMHISPLTFGRLLTIVEAFPGYFAGSNADLPIVGGSILTHEHYQGGRHTFPMEVAGIKEKVSFDGYSDVEAGIVNWPMSVLRLRSEDKERLIALATKILNCWRGYSDEKAGVLAESDGQPHHTITPIARRKDGKFELDLVLRDNQTSEEYPDGIYHPHKDVQHIKKENIGLIEVMGLAILPPRLKTELKDVEDYLLGQGNQVAPIHQEWADELKAQNPNITAEEVTEVVRQSVADIFARVLEDAGVYKTNNEGLDQFKAFVDFVNLAD</sequence>
<feature type="chain" id="PRO_0000169921" description="Galactose-1-phosphate uridylyltransferase">
    <location>
        <begin position="1"/>
        <end position="493"/>
    </location>
</feature>
<reference key="1">
    <citation type="journal article" date="2004" name="Nat. Biotechnol.">
        <title>Complete sequence and comparative genome analysis of the dairy bacterium Streptococcus thermophilus.</title>
        <authorList>
            <person name="Bolotin A."/>
            <person name="Quinquis B."/>
            <person name="Renault P."/>
            <person name="Sorokin A."/>
            <person name="Ehrlich S.D."/>
            <person name="Kulakauskas S."/>
            <person name="Lapidus A."/>
            <person name="Goltsman E."/>
            <person name="Mazur M."/>
            <person name="Pusch G.D."/>
            <person name="Fonstein M."/>
            <person name="Overbeek R."/>
            <person name="Kyprides N."/>
            <person name="Purnelle B."/>
            <person name="Prozzi D."/>
            <person name="Ngui K."/>
            <person name="Masuy D."/>
            <person name="Hancy F."/>
            <person name="Burteau S."/>
            <person name="Boutry M."/>
            <person name="Delcour J."/>
            <person name="Goffeau A."/>
            <person name="Hols P."/>
        </authorList>
    </citation>
    <scope>NUCLEOTIDE SEQUENCE [LARGE SCALE GENOMIC DNA]</scope>
    <source>
        <strain>ATCC BAA-250 / LMG 18311</strain>
    </source>
</reference>
<protein>
    <recommendedName>
        <fullName evidence="1">Galactose-1-phosphate uridylyltransferase</fullName>
        <shortName evidence="1">Gal-1-P uridylyltransferase</shortName>
        <ecNumber evidence="1">2.7.7.12</ecNumber>
    </recommendedName>
    <alternativeName>
        <fullName evidence="1">UDP-glucose--hexose-1-phosphate uridylyltransferase</fullName>
    </alternativeName>
</protein>
<organism>
    <name type="scientific">Streptococcus thermophilus (strain ATCC BAA-250 / LMG 18311)</name>
    <dbReference type="NCBI Taxonomy" id="264199"/>
    <lineage>
        <taxon>Bacteria</taxon>
        <taxon>Bacillati</taxon>
        <taxon>Bacillota</taxon>
        <taxon>Bacilli</taxon>
        <taxon>Lactobacillales</taxon>
        <taxon>Streptococcaceae</taxon>
        <taxon>Streptococcus</taxon>
    </lineage>
</organism>
<dbReference type="EC" id="2.7.7.12" evidence="1"/>
<dbReference type="EMBL" id="CP000023">
    <property type="protein sequence ID" value="AAV61015.1"/>
    <property type="status" value="ALT_INIT"/>
    <property type="molecule type" value="Genomic_DNA"/>
</dbReference>
<dbReference type="RefSeq" id="WP_041828385.1">
    <property type="nucleotide sequence ID" value="NC_006448.1"/>
</dbReference>
<dbReference type="STRING" id="264199.stu1401"/>
<dbReference type="KEGG" id="stl:stu1401"/>
<dbReference type="eggNOG" id="COG4468">
    <property type="taxonomic scope" value="Bacteria"/>
</dbReference>
<dbReference type="HOGENOM" id="CLU_047799_0_0_9"/>
<dbReference type="UniPathway" id="UPA00214"/>
<dbReference type="Proteomes" id="UP000001170">
    <property type="component" value="Chromosome"/>
</dbReference>
<dbReference type="GO" id="GO:0005737">
    <property type="term" value="C:cytoplasm"/>
    <property type="evidence" value="ECO:0007669"/>
    <property type="project" value="UniProtKB-SubCell"/>
</dbReference>
<dbReference type="GO" id="GO:0008108">
    <property type="term" value="F:UDP-glucose:hexose-1-phosphate uridylyltransferase activity"/>
    <property type="evidence" value="ECO:0007669"/>
    <property type="project" value="UniProtKB-UniRule"/>
</dbReference>
<dbReference type="GO" id="GO:0006012">
    <property type="term" value="P:galactose metabolic process"/>
    <property type="evidence" value="ECO:0007669"/>
    <property type="project" value="UniProtKB-UniRule"/>
</dbReference>
<dbReference type="HAMAP" id="MF_00571">
    <property type="entry name" value="GalP_UDP_trans"/>
    <property type="match status" value="1"/>
</dbReference>
<dbReference type="InterPro" id="IPR000766">
    <property type="entry name" value="GalP_uridyl_Trfase_II"/>
</dbReference>
<dbReference type="InterPro" id="IPR023425">
    <property type="entry name" value="GalP_uridyl_Trfase_II_CS"/>
</dbReference>
<dbReference type="InterPro" id="IPR005850">
    <property type="entry name" value="GalP_Utransf_C"/>
</dbReference>
<dbReference type="InterPro" id="IPR005849">
    <property type="entry name" value="GalP_Utransf_N"/>
</dbReference>
<dbReference type="NCBIfam" id="TIGR01239">
    <property type="entry name" value="galT_2"/>
    <property type="match status" value="1"/>
</dbReference>
<dbReference type="NCBIfam" id="NF003629">
    <property type="entry name" value="PRK05270.1-2"/>
    <property type="match status" value="1"/>
</dbReference>
<dbReference type="NCBIfam" id="NF003631">
    <property type="entry name" value="PRK05270.1-5"/>
    <property type="match status" value="1"/>
</dbReference>
<dbReference type="NCBIfam" id="NF003633">
    <property type="entry name" value="PRK05270.2-2"/>
    <property type="match status" value="1"/>
</dbReference>
<dbReference type="PANTHER" id="PTHR39191:SF1">
    <property type="entry name" value="DUF4922 DOMAIN-CONTAINING PROTEIN"/>
    <property type="match status" value="1"/>
</dbReference>
<dbReference type="PANTHER" id="PTHR39191">
    <property type="entry name" value="GALACTOSE-1-PHOSPHATE URIDYLYLTRANSFERASE"/>
    <property type="match status" value="1"/>
</dbReference>
<dbReference type="Pfam" id="PF02744">
    <property type="entry name" value="GalP_UDP_tr_C"/>
    <property type="match status" value="1"/>
</dbReference>
<dbReference type="Pfam" id="PF01087">
    <property type="entry name" value="GalP_UDP_transf"/>
    <property type="match status" value="1"/>
</dbReference>
<dbReference type="PIRSF" id="PIRSF006005">
    <property type="entry name" value="GalT_BS"/>
    <property type="match status" value="1"/>
</dbReference>
<dbReference type="PROSITE" id="PS01163">
    <property type="entry name" value="GAL_P_UDP_TRANSF_II"/>
    <property type="match status" value="1"/>
</dbReference>
<proteinExistence type="inferred from homology"/>
<accession>Q5M3K1</accession>
<keyword id="KW-0119">Carbohydrate metabolism</keyword>
<keyword id="KW-0963">Cytoplasm</keyword>
<keyword id="KW-0299">Galactose metabolism</keyword>
<keyword id="KW-0548">Nucleotidyltransferase</keyword>
<keyword id="KW-1185">Reference proteome</keyword>
<keyword id="KW-0808">Transferase</keyword>
<evidence type="ECO:0000255" key="1">
    <source>
        <dbReference type="HAMAP-Rule" id="MF_00571"/>
    </source>
</evidence>
<evidence type="ECO:0000305" key="2"/>
<name>GALT_STRT2</name>